<accession>P07195</accession>
<sequence length="334" mass="36638">MATLKEKLIAPVAEEEATVPNNKITVVGVGQVGMACAISILGKSLADELALVDVLEDKLKGEMMDLQHGSLFLQTPKIVADKDYSVTANSKIVVVTAGVRQQEGESRLNLVQRNVNVFKFIIPQIVKYSPDCIIIVVSNPVDILTYVTWKLSGLPKHRVIGSGCNLDSARFRYLMAEKLGIHPSSCHGWILGEHGDSSVAVWSGVNVAGVSLQELNPEMGTDNDSENWKEVHKMVVESAYEVIKLKGYTNWAIGLSVADLIESMLKNLSRIHPVSTMVKGMYGIENEVFLSLPCILNARGLTSVINQKLKDDEVAQLKKSADTLWDIQKDLKDL</sequence>
<gene>
    <name type="primary">LDHB</name>
</gene>
<evidence type="ECO:0000250" key="1"/>
<evidence type="ECO:0000269" key="2">
    <source>
    </source>
</evidence>
<evidence type="ECO:0000269" key="3">
    <source>
    </source>
</evidence>
<evidence type="ECO:0000269" key="4">
    <source>
    </source>
</evidence>
<evidence type="ECO:0000269" key="5">
    <source>
    </source>
</evidence>
<evidence type="ECO:0000269" key="6">
    <source>
    </source>
</evidence>
<evidence type="ECO:0000269" key="7">
    <source>
    </source>
</evidence>
<evidence type="ECO:0000269" key="8">
    <source>
    </source>
</evidence>
<evidence type="ECO:0000269" key="9">
    <source>
    </source>
</evidence>
<evidence type="ECO:0000269" key="10">
    <source>
    </source>
</evidence>
<evidence type="ECO:0000269" key="11">
    <source>
    </source>
</evidence>
<evidence type="ECO:0000269" key="12">
    <source>
    </source>
</evidence>
<evidence type="ECO:0000269" key="13">
    <source>
    </source>
</evidence>
<evidence type="ECO:0000269" key="14">
    <source ref="23"/>
</evidence>
<evidence type="ECO:0000269" key="15">
    <source ref="4"/>
</evidence>
<evidence type="ECO:0000303" key="16">
    <source>
    </source>
</evidence>
<evidence type="ECO:0000305" key="17"/>
<evidence type="ECO:0000305" key="18">
    <source>
    </source>
</evidence>
<evidence type="ECO:0000305" key="19">
    <source>
    </source>
</evidence>
<evidence type="ECO:0007744" key="20">
    <source>
    </source>
</evidence>
<evidence type="ECO:0007744" key="21">
    <source>
    </source>
</evidence>
<evidence type="ECO:0007744" key="22">
    <source>
    </source>
</evidence>
<evidence type="ECO:0007829" key="23">
    <source>
        <dbReference type="PDB" id="1T2F"/>
    </source>
</evidence>
<evidence type="ECO:0007829" key="24">
    <source>
        <dbReference type="PDB" id="7DBJ"/>
    </source>
</evidence>
<comment type="function">
    <text evidence="8">Interconverts simultaneously and stereospecifically pyruvate and lactate with concomitant interconversion of NADH and NAD(+).</text>
</comment>
<comment type="catalytic activity">
    <reaction evidence="4 8">
        <text>(S)-lactate + NAD(+) = pyruvate + NADH + H(+)</text>
        <dbReference type="Rhea" id="RHEA:23444"/>
        <dbReference type="ChEBI" id="CHEBI:15361"/>
        <dbReference type="ChEBI" id="CHEBI:15378"/>
        <dbReference type="ChEBI" id="CHEBI:16651"/>
        <dbReference type="ChEBI" id="CHEBI:57540"/>
        <dbReference type="ChEBI" id="CHEBI:57945"/>
        <dbReference type="EC" id="1.1.1.27"/>
    </reaction>
    <physiologicalReaction direction="left-to-right" evidence="4">
        <dbReference type="Rhea" id="RHEA:23445"/>
    </physiologicalReaction>
    <physiologicalReaction direction="right-to-left" evidence="4">
        <dbReference type="Rhea" id="RHEA:23446"/>
    </physiologicalReaction>
</comment>
<comment type="pathway">
    <text evidence="19">Fermentation; pyruvate fermentation to lactate; (S)-lactate from pyruvate: step 1/1.</text>
</comment>
<comment type="subunit">
    <text evidence="4 9">Homotetramer (PubMed:11276087). Interacts with PTEN upstream reading frame protein MP31; the interaction leads to inhibition of mitochondrial lactate dehydrogenase activity, preventing conversion of lactate to pyruvate in mitochondria (PubMed:33406399).</text>
</comment>
<comment type="interaction">
    <interactant intactId="EBI-358748">
        <id>P07195</id>
    </interactant>
    <interactant intactId="EBI-466029">
        <id>P42858</id>
        <label>HTT</label>
    </interactant>
    <organismsDiffer>false</organismsDiffer>
    <experiments>9</experiments>
</comment>
<comment type="interaction">
    <interactant intactId="EBI-358748">
        <id>P07195</id>
    </interactant>
    <interactant intactId="EBI-372327">
        <id>P00338</id>
        <label>LDHA</label>
    </interactant>
    <organismsDiffer>false</organismsDiffer>
    <experiments>5</experiments>
</comment>
<comment type="interaction">
    <interactant intactId="EBI-358748">
        <id>P07195</id>
    </interactant>
    <interactant intactId="EBI-10195200">
        <id>P00338-3</id>
        <label>LDHA</label>
    </interactant>
    <organismsDiffer>false</organismsDiffer>
    <experiments>9</experiments>
</comment>
<comment type="interaction">
    <interactant intactId="EBI-358748">
        <id>P07195</id>
    </interactant>
    <interactant intactId="EBI-358748">
        <id>P07195</id>
        <label>LDHB</label>
    </interactant>
    <organismsDiffer>false</organismsDiffer>
    <experiments>6</experiments>
</comment>
<comment type="interaction">
    <interactant intactId="EBI-358748">
        <id>P07195</id>
    </interactant>
    <interactant intactId="EBI-21716174">
        <id>P07864</id>
        <label>LDHC</label>
    </interactant>
    <organismsDiffer>false</organismsDiffer>
    <experiments>5</experiments>
</comment>
<comment type="interaction">
    <interactant intactId="EBI-358748">
        <id>P07195</id>
    </interactant>
    <interactant intactId="EBI-5323863">
        <id>Q5S007</id>
        <label>LRRK2</label>
    </interactant>
    <organismsDiffer>false</organismsDiffer>
    <experiments>2</experiments>
</comment>
<comment type="interaction">
    <interactant intactId="EBI-358748">
        <id>P07195</id>
    </interactant>
    <interactant intactId="EBI-597835">
        <id>P50542</id>
        <label>PEX5</label>
    </interactant>
    <organismsDiffer>false</organismsDiffer>
    <experiments>3</experiments>
</comment>
<comment type="interaction">
    <interactant intactId="EBI-358748">
        <id>P07195</id>
    </interactant>
    <interactant intactId="EBI-727004">
        <id>O00560</id>
        <label>SDCBP</label>
    </interactant>
    <organismsDiffer>false</organismsDiffer>
    <experiments>3</experiments>
</comment>
<comment type="interaction">
    <interactant intactId="EBI-358748">
        <id>P07195</id>
    </interactant>
    <interactant intactId="EBI-710997">
        <id>P54274</id>
        <label>TERF1</label>
    </interactant>
    <organismsDiffer>false</organismsDiffer>
    <experiments>2</experiments>
</comment>
<comment type="subcellular location">
    <subcellularLocation>
        <location>Cytoplasm</location>
    </subcellularLocation>
    <subcellularLocation>
        <location evidence="8">Mitochondrion inner membrane</location>
        <topology evidence="17">Peripheral membrane protein</topology>
    </subcellularLocation>
</comment>
<comment type="tissue specificity">
    <text evidence="18">Predominantly expressed in aerobic tissues such as cardiac muscle.</text>
</comment>
<comment type="disease" evidence="2 3 5 6 7 10 11 12 13 14">
    <disease id="DI-04441">
        <name>Lactate dehydrogenase B deficiency</name>
        <acronym>LDHBD</acronym>
        <description>A condition with no deleterious effects on health. LDHBD is of interest to laboratory medicine mainly because it can cause misdiagnosis in those disorders in which elevation of serum LDH is expected.</description>
        <dbReference type="MIM" id="614128"/>
    </disease>
    <text>The disease is caused by variants affecting the gene represented in this entry.</text>
</comment>
<comment type="similarity">
    <text evidence="17">Belongs to the LDH/MDH superfamily. LDH family.</text>
</comment>
<comment type="online information" name="Wikipedia">
    <link uri="https://en.wikipedia.org/wiki/Lactate_dehydrogenase"/>
    <text>Lactate dehydrogenase entry</text>
</comment>
<comment type="online information" name="Protein Spotlight">
    <link uri="https://www.proteinspotlight.org/back_issues/109"/>
    <text>Another dark horse - Issue 109 of September 2009</text>
</comment>
<reference key="1">
    <citation type="journal article" date="1989" name="Biochem. J.">
        <title>Structure of the human lactate dehydrogenase B gene.</title>
        <authorList>
            <person name="Takeno T."/>
            <person name="Li S.S.-L."/>
        </authorList>
    </citation>
    <scope>NUCLEOTIDE SEQUENCE [GENOMIC DNA]</scope>
</reference>
<reference key="2">
    <citation type="journal article" date="1987" name="Biochem. J.">
        <title>The cDNA and protein sequences of human lactate dehydrogenase B.</title>
        <authorList>
            <person name="Sakai I."/>
            <person name="Sharief F.S."/>
            <person name="Pan Y.-C.E."/>
            <person name="Li S.S.-L."/>
        </authorList>
    </citation>
    <scope>NUCLEOTIDE SEQUENCE [MRNA]</scope>
    <source>
        <tissue>T-cell</tissue>
    </source>
</reference>
<reference key="3">
    <citation type="journal article" date="2004" name="Genome Res.">
        <title>The status, quality, and expansion of the NIH full-length cDNA project: the Mammalian Gene Collection (MGC).</title>
        <authorList>
            <consortium name="The MGC Project Team"/>
        </authorList>
    </citation>
    <scope>NUCLEOTIDE SEQUENCE [LARGE SCALE MRNA]</scope>
    <source>
        <tissue>Muscle</tissue>
        <tissue>Urinary bladder</tissue>
    </source>
</reference>
<reference key="4">
    <citation type="submission" date="2005-05" db="UniProtKB">
        <authorList>
            <person name="Bienvenut W.V."/>
        </authorList>
    </citation>
    <scope>PROTEIN SEQUENCE OF 2-23; 44-58; 78-100; 108-113; 120-127; 159-170; 234-244; 271-279 AND 300-329</scope>
    <scope>CLEAVAGE OF INITIATOR METHIONINE</scope>
    <scope>ACETYLATION AT ALA-2</scope>
    <scope>IDENTIFICATION BY MASS SPECTROMETRY</scope>
    <source>
        <tissue>B-cell lymphoma</tissue>
    </source>
</reference>
<reference key="5">
    <citation type="submission" date="2008-12" db="UniProtKB">
        <authorList>
            <person name="Lubec G."/>
            <person name="Vishwanath V."/>
            <person name="Chen W.-Q."/>
            <person name="Sun Y."/>
        </authorList>
    </citation>
    <scope>PROTEIN SEQUENCE OF 8-23; 44-58; 78-91; 108-113; 120-127; 159-170; 234-244; 280-299 AND 300-318</scope>
    <scope>IDENTIFICATION BY MASS SPECTROMETRY</scope>
    <source>
        <tissue>Brain</tissue>
        <tissue>Cajal-Retzius cell</tissue>
        <tissue>Fetal brain cortex</tissue>
    </source>
</reference>
<reference key="6">
    <citation type="journal article" date="1999" name="Int. J. Cancer">
        <title>Antigens recognized by autologous antibody in patients with renal-cell carcinoma.</title>
        <authorList>
            <person name="Scanlan M.J."/>
            <person name="Gordan J.D."/>
            <person name="Williamson B."/>
            <person name="Stockert E."/>
            <person name="Bander N.H."/>
            <person name="Jongeneel C.V."/>
            <person name="Gure A.O."/>
            <person name="Jaeger D."/>
            <person name="Jaeger E."/>
            <person name="Knuth A."/>
            <person name="Chen Y.-T."/>
            <person name="Old L.J."/>
        </authorList>
    </citation>
    <scope>IDENTIFICATION AS A RENAL CANCER ANTIGEN</scope>
    <source>
        <tissue>Renal cell carcinoma</tissue>
    </source>
</reference>
<reference key="7">
    <citation type="journal article" date="2005" name="Nat. Biotechnol.">
        <title>Immunoaffinity profiling of tyrosine phosphorylation in cancer cells.</title>
        <authorList>
            <person name="Rush J."/>
            <person name="Moritz A."/>
            <person name="Lee K.A."/>
            <person name="Guo A."/>
            <person name="Goss V.L."/>
            <person name="Spek E.J."/>
            <person name="Zhang H."/>
            <person name="Zha X.-M."/>
            <person name="Polakiewicz R.D."/>
            <person name="Comb M.J."/>
        </authorList>
    </citation>
    <scope>IDENTIFICATION BY MASS SPECTROMETRY [LARGE SCALE ANALYSIS]</scope>
</reference>
<reference key="8">
    <citation type="journal article" date="2009" name="Sci. Signal.">
        <title>Quantitative phosphoproteomic analysis of T cell receptor signaling reveals system-wide modulation of protein-protein interactions.</title>
        <authorList>
            <person name="Mayya V."/>
            <person name="Lundgren D.H."/>
            <person name="Hwang S.-I."/>
            <person name="Rezaul K."/>
            <person name="Wu L."/>
            <person name="Eng J.K."/>
            <person name="Rodionov V."/>
            <person name="Han D.K."/>
        </authorList>
    </citation>
    <scope>PHOSPHORYLATION [LARGE SCALE ANALYSIS] AT SER-44 AND TYR-240</scope>
    <scope>IDENTIFICATION BY MASS SPECTROMETRY [LARGE SCALE ANALYSIS]</scope>
    <source>
        <tissue>Leukemic T-cell</tissue>
    </source>
</reference>
<reference key="9">
    <citation type="journal article" date="2009" name="Science">
        <title>Lysine acetylation targets protein complexes and co-regulates major cellular functions.</title>
        <authorList>
            <person name="Choudhary C."/>
            <person name="Kumar C."/>
            <person name="Gnad F."/>
            <person name="Nielsen M.L."/>
            <person name="Rehman M."/>
            <person name="Walther T.C."/>
            <person name="Olsen J.V."/>
            <person name="Mann M."/>
        </authorList>
    </citation>
    <scope>ACETYLATION [LARGE SCALE ANALYSIS] AT LYS-7; LYS-58; LYS-119 AND LYS-329</scope>
    <scope>IDENTIFICATION BY MASS SPECTROMETRY [LARGE SCALE ANALYSIS]</scope>
</reference>
<reference key="10">
    <citation type="journal article" date="2010" name="Sci. Signal.">
        <title>Quantitative phosphoproteomics reveals widespread full phosphorylation site occupancy during mitosis.</title>
        <authorList>
            <person name="Olsen J.V."/>
            <person name="Vermeulen M."/>
            <person name="Santamaria A."/>
            <person name="Kumar C."/>
            <person name="Miller M.L."/>
            <person name="Jensen L.J."/>
            <person name="Gnad F."/>
            <person name="Cox J."/>
            <person name="Jensen T.S."/>
            <person name="Nigg E.A."/>
            <person name="Brunak S."/>
            <person name="Mann M."/>
        </authorList>
    </citation>
    <scope>PHOSPHORYLATION [LARGE SCALE ANALYSIS] AT TYR-240</scope>
    <scope>IDENTIFICATION BY MASS SPECTROMETRY [LARGE SCALE ANALYSIS]</scope>
    <source>
        <tissue>Cervix carcinoma</tissue>
    </source>
</reference>
<reference key="11">
    <citation type="journal article" date="2011" name="BMC Syst. Biol.">
        <title>Initial characterization of the human central proteome.</title>
        <authorList>
            <person name="Burkard T.R."/>
            <person name="Planyavsky M."/>
            <person name="Kaupe I."/>
            <person name="Breitwieser F.P."/>
            <person name="Buerckstuemmer T."/>
            <person name="Bennett K.L."/>
            <person name="Superti-Furga G."/>
            <person name="Colinge J."/>
        </authorList>
    </citation>
    <scope>IDENTIFICATION BY MASS SPECTROMETRY [LARGE SCALE ANALYSIS]</scope>
</reference>
<reference key="12">
    <citation type="journal article" date="2013" name="J. Proteome Res.">
        <title>Toward a comprehensive characterization of a human cancer cell phosphoproteome.</title>
        <authorList>
            <person name="Zhou H."/>
            <person name="Di Palma S."/>
            <person name="Preisinger C."/>
            <person name="Peng M."/>
            <person name="Polat A.N."/>
            <person name="Heck A.J."/>
            <person name="Mohammed S."/>
        </authorList>
    </citation>
    <scope>IDENTIFICATION BY MASS SPECTROMETRY [LARGE SCALE ANALYSIS]</scope>
    <source>
        <tissue>Erythroleukemia</tissue>
    </source>
</reference>
<reference key="13">
    <citation type="journal article" date="2014" name="J. Proteomics">
        <title>An enzyme assisted RP-RPLC approach for in-depth analysis of human liver phosphoproteome.</title>
        <authorList>
            <person name="Bian Y."/>
            <person name="Song C."/>
            <person name="Cheng K."/>
            <person name="Dong M."/>
            <person name="Wang F."/>
            <person name="Huang J."/>
            <person name="Sun D."/>
            <person name="Wang L."/>
            <person name="Ye M."/>
            <person name="Zou H."/>
        </authorList>
    </citation>
    <scope>IDENTIFICATION BY MASS SPECTROMETRY [LARGE SCALE ANALYSIS]</scope>
    <source>
        <tissue>Liver</tissue>
    </source>
</reference>
<reference key="14">
    <citation type="journal article" date="2015" name="Proteomics">
        <title>N-terminome analysis of the human mitochondrial proteome.</title>
        <authorList>
            <person name="Vaca Jacome A.S."/>
            <person name="Rabilloud T."/>
            <person name="Schaeffer-Reiss C."/>
            <person name="Rompais M."/>
            <person name="Ayoub D."/>
            <person name="Lane L."/>
            <person name="Bairoch A."/>
            <person name="Van Dorsselaer A."/>
            <person name="Carapito C."/>
        </authorList>
    </citation>
    <scope>IDENTIFICATION BY MASS SPECTROMETRY [LARGE SCALE ANALYSIS]</scope>
</reference>
<reference key="15">
    <citation type="journal article" date="2016" name="Nat. Chem. Biol.">
        <title>Lactate metabolism is associated with mammalian mitochondria.</title>
        <authorList>
            <person name="Chen Y.J."/>
            <person name="Mahieu N.G."/>
            <person name="Huang X."/>
            <person name="Singh M."/>
            <person name="Crawford P.A."/>
            <person name="Johnson S.L."/>
            <person name="Gross R.W."/>
            <person name="Schaefer J."/>
            <person name="Patti G.J."/>
        </authorList>
    </citation>
    <scope>CATALYTIC ACTIVITY</scope>
    <scope>SUBCELLULAR LOCATION</scope>
</reference>
<reference key="16">
    <citation type="journal article" date="2021" name="Cell Metab.">
        <title>An Upstream Open Reading Frame in Phosphatase and Tensin Homolog Encodes a Circuit Breaker of Lactate Metabolism.</title>
        <authorList>
            <person name="Huang N."/>
            <person name="Li F."/>
            <person name="Zhang M."/>
            <person name="Zhou H."/>
            <person name="Chen Z."/>
            <person name="Ma X."/>
            <person name="Yang L."/>
            <person name="Wu X."/>
            <person name="Zhong J."/>
            <person name="Xiao F."/>
            <person name="Yang X."/>
            <person name="Zhao K."/>
            <person name="Li X."/>
            <person name="Xia X."/>
            <person name="Liu Z."/>
            <person name="Gao S."/>
            <person name="Zhang N."/>
        </authorList>
    </citation>
    <scope>INTERACTION WITH MP31</scope>
    <scope>MUTAGENESIS OF ASP-53 AND ARG-100</scope>
</reference>
<reference key="17">
    <citation type="journal article" date="2021" name="Cell Metab.">
        <authorList>
            <person name="Huang N."/>
            <person name="Li F."/>
            <person name="Zhang M."/>
            <person name="Zhou H."/>
            <person name="Chen Z."/>
            <person name="Ma X."/>
            <person name="Yang L."/>
            <person name="Wu X."/>
            <person name="Zhong J."/>
            <person name="Xiao F."/>
            <person name="Yang X."/>
            <person name="Zhao K."/>
            <person name="Li X."/>
            <person name="Xia X."/>
            <person name="Liu Z."/>
            <person name="Gao S."/>
            <person name="Zhang N."/>
        </authorList>
    </citation>
    <scope>ERRATUM OF PUBMED:33406399</scope>
</reference>
<reference key="18">
    <citation type="journal article" date="2001" name="Proteins">
        <title>Structural basis for altered activity of M- and H-isozyme forms of human lactate dehydrogenase.</title>
        <authorList>
            <person name="Read J.A."/>
            <person name="Winter V.J."/>
            <person name="Eszes C.M."/>
            <person name="Sessions R.B."/>
            <person name="Brady R.L."/>
        </authorList>
    </citation>
    <scope>X-RAY CRYSTALLOGRAPHY (2.1 ANGSTROMS) IN COMPLEX WITH NADH AND SUBSTRATE ANALOG</scope>
    <scope>HOMOTETRAMERIZATION</scope>
    <scope>CATALYTIC ACTIVITY</scope>
    <scope>FUNCTION</scope>
    <scope>BIOPHYSICOCHEMICAL PROPERTIES</scope>
</reference>
<reference key="19">
    <citation type="journal article" date="1993" name="Hum. Genet.">
        <title>Analysis of a genetic mutation in an electrophoretic variant of the human lactate dehydrogenase-B(H) subunit.</title>
        <authorList>
            <person name="Maekawa M."/>
            <person name="Sudo K."/>
            <person name="Kitajima M."/>
            <person name="Matsuura Y."/>
            <person name="Li S.S.-L."/>
            <person name="Kanno T."/>
        </authorList>
    </citation>
    <scope>VARIANT LDHBD GLU-7</scope>
</reference>
<reference key="20">
    <citation type="journal article" date="1993" name="Hum. Genet.">
        <title>Detection and characterization of new genetic mutations in individuals heterozygous for lactate dehydrogenase-B(H) deficiency using DNA conformation polymorphism analysis and silver staining.</title>
        <authorList>
            <person name="Maekawa M."/>
            <person name="Sudo K."/>
            <person name="Kitajima M."/>
            <person name="Matsuura Y."/>
            <person name="Li S.S.-L."/>
            <person name="Kanno T."/>
        </authorList>
    </citation>
    <scope>VARIANTS LDHBD GLU-35; VAL-171 AND LEU-175</scope>
</reference>
<reference key="21">
    <citation type="journal article" date="1992" name="Hum. Genet.">
        <title>Molecular characterization of genetic mutations in human lactate dehydrogenase (LDH) B (H) variant.</title>
        <authorList>
            <person name="Sudo K."/>
            <person name="Maekawa M."/>
            <person name="Tomonaga A."/>
            <person name="Tsukada T."/>
            <person name="Nakayama T."/>
            <person name="Kitamura M."/>
            <person name="Li S.S.-L."/>
            <person name="Kanno T."/>
            <person name="Toriumi J."/>
        </authorList>
    </citation>
    <scope>VARIANTS LDHBD ARG-129 AND HIS-172</scope>
</reference>
<reference key="22">
    <citation type="journal article" date="1990" name="Biochem. Biophys. Res. Commun.">
        <title>A missense mutation found in human lactate dehydrogenase-B (H) variant gene.</title>
        <authorList>
            <person name="Sudo K."/>
            <person name="Maekawa M."/>
            <person name="Ikawa S."/>
            <person name="Machida K."/>
            <person name="Kitamura M."/>
            <person name="Li S.S.-L."/>
        </authorList>
    </citation>
    <scope>VARIANT LDHBD HIS-172</scope>
</reference>
<reference key="23">
    <citation type="journal article" date="1994" name="Seibutsu Butsuri Kagaku">
        <title>DNA analysis of slow type of electrophoretic lactate dehydrogenase B(H) variant.</title>
        <authorList>
            <person name="Maekawa M."/>
            <person name="Sudo K."/>
            <person name="Fujita K."/>
            <person name="Yoshioka N."/>
            <person name="Sakurabayashi I."/>
            <person name="Li S.S.-L."/>
            <person name="Kanno T."/>
        </authorList>
    </citation>
    <scope>VARIANT LDHBD VAL-322</scope>
</reference>
<reference key="24">
    <citation type="journal article" date="1996" name="Biochim. Biophys. Acta">
        <title>Arginine to tryptophan substitution in the active site of a human lactate dehydrogenase variant -- LDHB GUA1: postulated effects on subunit structure and catalysis.</title>
        <authorList>
            <person name="Shonnard G.C."/>
            <person name="Hud N.V."/>
            <person name="Mohrenweiser H.W."/>
        </authorList>
    </citation>
    <scope>VARIANT LDHBD TRP-107</scope>
</reference>
<reference key="25">
    <citation type="journal article" date="1999" name="Clin. Biochem.">
        <title>A novel in-frame deletion mutation in a case of lactate dehydrogenase (LD) H subunit deficiency showing an atypical LD isoenzyme pattern in serum and erythrocytes.</title>
        <authorList>
            <person name="Sudo K."/>
            <person name="Maekawa M."/>
            <person name="Houki N."/>
            <person name="Okuda T."/>
            <person name="Akizuki S."/>
            <person name="Magara T."/>
            <person name="Kawano K."/>
        </authorList>
    </citation>
    <scope>VARIANT LDHBD ASN-223 DEL</scope>
</reference>
<reference key="26">
    <citation type="journal article" date="1999" name="Clin. Chim. Acta">
        <title>Genetic analyses in homozygous and heterozygous variants of lactate dehydrogenase-B (H) subunit--LD-B Matsumoto I and II (LD-B W323R).</title>
        <authorList>
            <person name="Okumura N."/>
            <person name="Terasawa F."/>
            <person name="Ueno I."/>
            <person name="Oki K."/>
            <person name="Yamauchi K."/>
            <person name="Hidaka H."/>
            <person name="Tozuka M."/>
            <person name="Okura M."/>
            <person name="Katsuyama T."/>
        </authorList>
    </citation>
    <scope>VARIANT LDHBD ARG-325</scope>
</reference>
<reference key="27">
    <citation type="journal article" date="1999" name="J. Hum. Genet.">
        <title>First case of missense mutation (LDH-H:R171P) in exon 4 of the lactate dehydrogenase gene detected in a Japanese patient.</title>
        <authorList>
            <person name="Hidaka K."/>
            <person name="Ueda N."/>
            <person name="Hirata I."/>
            <person name="Watanabe Y."/>
            <person name="Minatogawa Y."/>
            <person name="Iuchi I."/>
        </authorList>
    </citation>
    <scope>VARIANT LDHBD PRO-172</scope>
</reference>
<reference key="28">
    <citation type="journal article" date="2001" name="Mol. Genet. Metab.">
        <title>A novel missense mutation in human lactate dehydrogenase b-subunit gene.</title>
        <authorList>
            <person name="Takatani T."/>
            <person name="Takaoka N."/>
            <person name="Tatsumi M."/>
            <person name="Kawamoto H."/>
            <person name="Okuno Y."/>
            <person name="Morita K."/>
            <person name="Masutani T."/>
            <person name="Murakawa K."/>
            <person name="Okamoto Y."/>
        </authorList>
    </citation>
    <scope>VARIANT LDHBD GLU-69</scope>
</reference>
<organism>
    <name type="scientific">Homo sapiens</name>
    <name type="common">Human</name>
    <dbReference type="NCBI Taxonomy" id="9606"/>
    <lineage>
        <taxon>Eukaryota</taxon>
        <taxon>Metazoa</taxon>
        <taxon>Chordata</taxon>
        <taxon>Craniata</taxon>
        <taxon>Vertebrata</taxon>
        <taxon>Euteleostomi</taxon>
        <taxon>Mammalia</taxon>
        <taxon>Eutheria</taxon>
        <taxon>Euarchontoglires</taxon>
        <taxon>Primates</taxon>
        <taxon>Haplorrhini</taxon>
        <taxon>Catarrhini</taxon>
        <taxon>Hominidae</taxon>
        <taxon>Homo</taxon>
    </lineage>
</organism>
<keyword id="KW-0002">3D-structure</keyword>
<keyword id="KW-0007">Acetylation</keyword>
<keyword id="KW-0963">Cytoplasm</keyword>
<keyword id="KW-0903">Direct protein sequencing</keyword>
<keyword id="KW-0225">Disease variant</keyword>
<keyword id="KW-0472">Membrane</keyword>
<keyword id="KW-0496">Mitochondrion</keyword>
<keyword id="KW-0999">Mitochondrion inner membrane</keyword>
<keyword id="KW-0520">NAD</keyword>
<keyword id="KW-0560">Oxidoreductase</keyword>
<keyword id="KW-0597">Phosphoprotein</keyword>
<keyword id="KW-1267">Proteomics identification</keyword>
<keyword id="KW-1185">Reference proteome</keyword>
<name>LDHB_HUMAN</name>
<feature type="initiator methionine" description="Removed" evidence="15">
    <location>
        <position position="1"/>
    </location>
</feature>
<feature type="chain" id="PRO_0000168459" description="L-lactate dehydrogenase B chain">
    <location>
        <begin position="2"/>
        <end position="334"/>
    </location>
</feature>
<feature type="active site" description="Proton acceptor">
    <location>
        <position position="194"/>
    </location>
</feature>
<feature type="binding site" evidence="1">
    <location>
        <begin position="31"/>
        <end position="53"/>
    </location>
    <ligand>
        <name>NAD(+)</name>
        <dbReference type="ChEBI" id="CHEBI:57540"/>
    </ligand>
</feature>
<feature type="binding site" evidence="4">
    <location>
        <position position="100"/>
    </location>
    <ligand>
        <name>NAD(+)</name>
        <dbReference type="ChEBI" id="CHEBI:57540"/>
    </ligand>
</feature>
<feature type="binding site">
    <location>
        <position position="107"/>
    </location>
    <ligand>
        <name>substrate</name>
    </ligand>
</feature>
<feature type="binding site" evidence="4">
    <location>
        <position position="139"/>
    </location>
    <ligand>
        <name>NAD(+)</name>
        <dbReference type="ChEBI" id="CHEBI:57540"/>
    </ligand>
</feature>
<feature type="binding site">
    <location>
        <position position="139"/>
    </location>
    <ligand>
        <name>substrate</name>
    </ligand>
</feature>
<feature type="binding site">
    <location>
        <position position="170"/>
    </location>
    <ligand>
        <name>substrate</name>
    </ligand>
</feature>
<feature type="binding site">
    <location>
        <position position="249"/>
    </location>
    <ligand>
        <name>substrate</name>
    </ligand>
</feature>
<feature type="modified residue" description="N-acetylalanine" evidence="15">
    <location>
        <position position="2"/>
    </location>
</feature>
<feature type="modified residue" description="N6-acetyllysine" evidence="20">
    <location>
        <position position="7"/>
    </location>
</feature>
<feature type="modified residue" description="Phosphoserine" evidence="21">
    <location>
        <position position="44"/>
    </location>
</feature>
<feature type="modified residue" description="N6-acetyllysine" evidence="20">
    <location>
        <position position="58"/>
    </location>
</feature>
<feature type="modified residue" description="N6-acetyllysine" evidence="20">
    <location>
        <position position="119"/>
    </location>
</feature>
<feature type="modified residue" description="Phosphotyrosine" evidence="21 22">
    <location>
        <position position="240"/>
    </location>
</feature>
<feature type="modified residue" description="N6-acetyllysine" evidence="20">
    <location>
        <position position="329"/>
    </location>
</feature>
<feature type="sequence variant" id="VAR_004173" description="In LDHBD; slightly decreased activity; dbSNP:rs118203897." evidence="10">
    <original>K</original>
    <variation>E</variation>
    <location>
        <position position="7"/>
    </location>
</feature>
<feature type="sequence variant" id="VAR_004174" description="In LDHBD." evidence="11">
    <original>A</original>
    <variation>E</variation>
    <location>
        <position position="35"/>
    </location>
</feature>
<feature type="sequence variant" id="VAR_011634" description="In LDHBD." evidence="5">
    <original>G</original>
    <variation>E</variation>
    <location>
        <position position="69"/>
    </location>
</feature>
<feature type="sequence variant" id="VAR_011635" description="In LDHBD; inactive; dbSNP:rs777954556." evidence="12">
    <original>R</original>
    <variation>W</variation>
    <location>
        <position position="107"/>
    </location>
</feature>
<feature type="sequence variant" id="VAR_004175" description="In LDHBD; dbSNP:rs118203896." evidence="6">
    <original>S</original>
    <variation>R</variation>
    <location>
        <position position="129"/>
    </location>
</feature>
<feature type="sequence variant" id="VAR_004176" description="In LDHBD." evidence="11">
    <original>F</original>
    <variation>V</variation>
    <location>
        <position position="171"/>
    </location>
</feature>
<feature type="sequence variant" id="VAR_004177" description="In LDHBD; dbSNP:rs118203895." evidence="6 7">
    <original>R</original>
    <variation>H</variation>
    <location>
        <position position="172"/>
    </location>
</feature>
<feature type="sequence variant" id="VAR_011636" description="In LDHBD." evidence="13">
    <original>R</original>
    <variation>P</variation>
    <location>
        <position position="172"/>
    </location>
</feature>
<feature type="sequence variant" id="VAR_004178" description="In LDHBD." evidence="11">
    <original>M</original>
    <variation>L</variation>
    <location>
        <position position="175"/>
    </location>
</feature>
<feature type="sequence variant" id="VAR_049758" description="In dbSNP:rs7966339.">
    <original>M</original>
    <variation>V</variation>
    <location>
        <position position="175"/>
    </location>
</feature>
<feature type="sequence variant" id="VAR_011637" description="In LDHBD." evidence="2">
    <location>
        <position position="223"/>
    </location>
</feature>
<feature type="sequence variant" id="VAR_004179" description="In LDHBD." evidence="14">
    <original>D</original>
    <variation>V</variation>
    <location>
        <position position="322"/>
    </location>
</feature>
<feature type="sequence variant" id="VAR_011638" description="In LDHBD; dbSNP:rs267607212." evidence="3">
    <original>W</original>
    <variation>R</variation>
    <location>
        <position position="325"/>
    </location>
</feature>
<feature type="mutagenesis site" description="Abolishes interaction with MP31." evidence="9">
    <original>D</original>
    <variation>A</variation>
    <location>
        <position position="53"/>
    </location>
</feature>
<feature type="mutagenesis site" description="Abolishes interaction with MP31." evidence="9">
    <original>R</original>
    <variation>A</variation>
    <location>
        <position position="100"/>
    </location>
</feature>
<feature type="helix" evidence="24">
    <location>
        <begin position="4"/>
        <end position="8"/>
    </location>
</feature>
<feature type="strand" evidence="24">
    <location>
        <begin position="9"/>
        <end position="13"/>
    </location>
</feature>
<feature type="strand" evidence="24">
    <location>
        <begin position="21"/>
        <end position="27"/>
    </location>
</feature>
<feature type="helix" evidence="24">
    <location>
        <begin position="31"/>
        <end position="42"/>
    </location>
</feature>
<feature type="strand" evidence="24">
    <location>
        <begin position="47"/>
        <end position="52"/>
    </location>
</feature>
<feature type="helix" evidence="24">
    <location>
        <begin position="56"/>
        <end position="68"/>
    </location>
</feature>
<feature type="helix" evidence="24">
    <location>
        <begin position="69"/>
        <end position="72"/>
    </location>
</feature>
<feature type="strand" evidence="24">
    <location>
        <begin position="77"/>
        <end position="80"/>
    </location>
</feature>
<feature type="helix" evidence="24">
    <location>
        <begin position="84"/>
        <end position="87"/>
    </location>
</feature>
<feature type="strand" evidence="24">
    <location>
        <begin position="91"/>
        <end position="95"/>
    </location>
</feature>
<feature type="helix" evidence="24">
    <location>
        <begin position="107"/>
        <end position="110"/>
    </location>
</feature>
<feature type="helix" evidence="24">
    <location>
        <begin position="111"/>
        <end position="128"/>
    </location>
</feature>
<feature type="strand" evidence="24">
    <location>
        <begin position="133"/>
        <end position="136"/>
    </location>
</feature>
<feature type="strand" evidence="24">
    <location>
        <begin position="138"/>
        <end position="140"/>
    </location>
</feature>
<feature type="helix" evidence="24">
    <location>
        <begin position="141"/>
        <end position="152"/>
    </location>
</feature>
<feature type="helix" evidence="24">
    <location>
        <begin position="156"/>
        <end position="158"/>
    </location>
</feature>
<feature type="strand" evidence="24">
    <location>
        <begin position="159"/>
        <end position="161"/>
    </location>
</feature>
<feature type="helix" evidence="24">
    <location>
        <begin position="165"/>
        <end position="179"/>
    </location>
</feature>
<feature type="helix" evidence="24">
    <location>
        <begin position="183"/>
        <end position="185"/>
    </location>
</feature>
<feature type="strand" evidence="24">
    <location>
        <begin position="190"/>
        <end position="192"/>
    </location>
</feature>
<feature type="helix" evidence="24">
    <location>
        <begin position="202"/>
        <end position="204"/>
    </location>
</feature>
<feature type="helix" evidence="24">
    <location>
        <begin position="212"/>
        <end position="215"/>
    </location>
</feature>
<feature type="turn" evidence="24">
    <location>
        <begin position="217"/>
        <end position="220"/>
    </location>
</feature>
<feature type="strand" evidence="24">
    <location>
        <begin position="221"/>
        <end position="223"/>
    </location>
</feature>
<feature type="strand" evidence="23">
    <location>
        <begin position="225"/>
        <end position="227"/>
    </location>
</feature>
<feature type="helix" evidence="24">
    <location>
        <begin position="229"/>
        <end position="246"/>
    </location>
</feature>
<feature type="helix" evidence="24">
    <location>
        <begin position="251"/>
        <end position="265"/>
    </location>
</feature>
<feature type="strand" evidence="24">
    <location>
        <begin position="270"/>
        <end position="277"/>
    </location>
</feature>
<feature type="turn" evidence="23">
    <location>
        <begin position="279"/>
        <end position="282"/>
    </location>
</feature>
<feature type="strand" evidence="24">
    <location>
        <begin position="289"/>
        <end position="297"/>
    </location>
</feature>
<feature type="strand" evidence="24">
    <location>
        <begin position="300"/>
        <end position="305"/>
    </location>
</feature>
<feature type="helix" evidence="24">
    <location>
        <begin position="311"/>
        <end position="328"/>
    </location>
</feature>
<protein>
    <recommendedName>
        <fullName>L-lactate dehydrogenase B chain</fullName>
        <shortName>LDH-B</shortName>
        <ecNumber evidence="4 8">1.1.1.27</ecNumber>
    </recommendedName>
    <alternativeName>
        <fullName>LDH heart subunit</fullName>
        <shortName evidence="16">LDH-H</shortName>
    </alternativeName>
    <alternativeName>
        <fullName>Renal carcinoma antigen NY-REN-46</fullName>
    </alternativeName>
</protein>
<dbReference type="EC" id="1.1.1.27" evidence="4 8"/>
<dbReference type="EMBL" id="X13794">
    <property type="protein sequence ID" value="CAA32033.1"/>
    <property type="molecule type" value="Genomic_DNA"/>
</dbReference>
<dbReference type="EMBL" id="X13795">
    <property type="protein sequence ID" value="CAA32033.1"/>
    <property type="status" value="JOINED"/>
    <property type="molecule type" value="Genomic_DNA"/>
</dbReference>
<dbReference type="EMBL" id="X13796">
    <property type="protein sequence ID" value="CAA32033.1"/>
    <property type="status" value="JOINED"/>
    <property type="molecule type" value="Genomic_DNA"/>
</dbReference>
<dbReference type="EMBL" id="X13797">
    <property type="protein sequence ID" value="CAA32033.1"/>
    <property type="status" value="JOINED"/>
    <property type="molecule type" value="Genomic_DNA"/>
</dbReference>
<dbReference type="EMBL" id="X13798">
    <property type="protein sequence ID" value="CAA32033.1"/>
    <property type="status" value="JOINED"/>
    <property type="molecule type" value="Genomic_DNA"/>
</dbReference>
<dbReference type="EMBL" id="X13799">
    <property type="protein sequence ID" value="CAA32033.1"/>
    <property type="status" value="JOINED"/>
    <property type="molecule type" value="Genomic_DNA"/>
</dbReference>
<dbReference type="EMBL" id="X13800">
    <property type="protein sequence ID" value="CAA32033.1"/>
    <property type="status" value="JOINED"/>
    <property type="molecule type" value="Genomic_DNA"/>
</dbReference>
<dbReference type="EMBL" id="Y00711">
    <property type="protein sequence ID" value="CAA68701.1"/>
    <property type="molecule type" value="mRNA"/>
</dbReference>
<dbReference type="EMBL" id="BC002362">
    <property type="protein sequence ID" value="AAH02362.1"/>
    <property type="molecule type" value="mRNA"/>
</dbReference>
<dbReference type="EMBL" id="BC015122">
    <property type="protein sequence ID" value="AAH15122.1"/>
    <property type="molecule type" value="mRNA"/>
</dbReference>
<dbReference type="EMBL" id="BC071860">
    <property type="protein sequence ID" value="AAH71860.1"/>
    <property type="molecule type" value="mRNA"/>
</dbReference>
<dbReference type="CCDS" id="CCDS8691.1"/>
<dbReference type="PIR" id="S02795">
    <property type="entry name" value="DEHULH"/>
</dbReference>
<dbReference type="RefSeq" id="NP_001167568.1">
    <property type="nucleotide sequence ID" value="NM_001174097.3"/>
</dbReference>
<dbReference type="RefSeq" id="NP_001302466.1">
    <property type="nucleotide sequence ID" value="NM_001315537.1"/>
</dbReference>
<dbReference type="RefSeq" id="NP_002291.1">
    <property type="nucleotide sequence ID" value="NM_002300.8"/>
</dbReference>
<dbReference type="PDB" id="1I0Z">
    <property type="method" value="X-ray"/>
    <property type="resolution" value="2.10 A"/>
    <property type="chains" value="A/B=2-334"/>
</dbReference>
<dbReference type="PDB" id="1T2F">
    <property type="method" value="X-ray"/>
    <property type="resolution" value="3.00 A"/>
    <property type="chains" value="A/B/C/D=2-332"/>
</dbReference>
<dbReference type="PDB" id="7DBJ">
    <property type="method" value="X-ray"/>
    <property type="resolution" value="1.55 A"/>
    <property type="chains" value="A/B/C/D=2-334"/>
</dbReference>
<dbReference type="PDB" id="7DBK">
    <property type="method" value="X-ray"/>
    <property type="resolution" value="1.80 A"/>
    <property type="chains" value="A/B/C/D/E/F/G/H=2-334"/>
</dbReference>
<dbReference type="PDB" id="8QDE">
    <property type="method" value="X-ray"/>
    <property type="resolution" value="2.98 A"/>
    <property type="chains" value="A/B/C/D=21-334"/>
</dbReference>
<dbReference type="PDBsum" id="1I0Z"/>
<dbReference type="PDBsum" id="1T2F"/>
<dbReference type="PDBsum" id="7DBJ"/>
<dbReference type="PDBsum" id="7DBK"/>
<dbReference type="PDBsum" id="8QDE"/>
<dbReference type="SMR" id="P07195"/>
<dbReference type="BioGRID" id="110137">
    <property type="interactions" value="339"/>
</dbReference>
<dbReference type="ComplexPortal" id="CPX-6592">
    <property type="entry name" value="L-lactate dehydrogenase complex, A3B1 variant"/>
</dbReference>
<dbReference type="ComplexPortal" id="CPX-6594">
    <property type="entry name" value="L-lactate dehydrogenase complex, A2B2 variant"/>
</dbReference>
<dbReference type="ComplexPortal" id="CPX-6598">
    <property type="entry name" value="L-lactate dehydrogenase complex, A1B3 variant"/>
</dbReference>
<dbReference type="ComplexPortal" id="CPX-6599">
    <property type="entry name" value="L-lactate dehydrogenase B complex"/>
</dbReference>
<dbReference type="FunCoup" id="P07195">
    <property type="interactions" value="950"/>
</dbReference>
<dbReference type="IntAct" id="P07195">
    <property type="interactions" value="89"/>
</dbReference>
<dbReference type="MINT" id="P07195"/>
<dbReference type="BindingDB" id="P07195"/>
<dbReference type="ChEMBL" id="CHEMBL4940"/>
<dbReference type="DrugBank" id="DB02401">
    <property type="generic name" value="4-Hydroxy-1,2,5-oxadiazole-3-carboxylic acid"/>
</dbReference>
<dbReference type="DrugBank" id="DB11638">
    <property type="generic name" value="Artenimol"/>
</dbReference>
<dbReference type="DrugBank" id="DB00157">
    <property type="generic name" value="NADH"/>
</dbReference>
<dbReference type="DrugBank" id="DB03940">
    <property type="generic name" value="Oxamic Acid"/>
</dbReference>
<dbReference type="DrugBank" id="DB09118">
    <property type="generic name" value="Stiripentol"/>
</dbReference>
<dbReference type="DrugCentral" id="P07195"/>
<dbReference type="GlyGen" id="P07195">
    <property type="glycosylation" value="1 site, 1 O-linked glycan (1 site)"/>
</dbReference>
<dbReference type="iPTMnet" id="P07195"/>
<dbReference type="MetOSite" id="P07195"/>
<dbReference type="PhosphoSitePlus" id="P07195"/>
<dbReference type="SwissPalm" id="P07195"/>
<dbReference type="BioMuta" id="LDHB"/>
<dbReference type="DMDM" id="126041"/>
<dbReference type="OGP" id="P07195"/>
<dbReference type="REPRODUCTION-2DPAGE" id="IPI00219217"/>
<dbReference type="CPTAC" id="CPTAC-2751"/>
<dbReference type="jPOST" id="P07195"/>
<dbReference type="MassIVE" id="P07195"/>
<dbReference type="PaxDb" id="9606-ENSP00000379386"/>
<dbReference type="PeptideAtlas" id="P07195"/>
<dbReference type="ProteomicsDB" id="51960"/>
<dbReference type="Pumba" id="P07195"/>
<dbReference type="TopDownProteomics" id="P07195"/>
<dbReference type="Antibodypedia" id="3304">
    <property type="antibodies" value="457 antibodies from 39 providers"/>
</dbReference>
<dbReference type="DNASU" id="3945"/>
<dbReference type="Ensembl" id="ENST00000350669.5">
    <property type="protein sequence ID" value="ENSP00000229319.1"/>
    <property type="gene ID" value="ENSG00000111716.14"/>
</dbReference>
<dbReference type="Ensembl" id="ENST00000396076.5">
    <property type="protein sequence ID" value="ENSP00000379386.1"/>
    <property type="gene ID" value="ENSG00000111716.14"/>
</dbReference>
<dbReference type="GeneID" id="3945"/>
<dbReference type="KEGG" id="hsa:3945"/>
<dbReference type="MANE-Select" id="ENST00000350669.5">
    <property type="protein sequence ID" value="ENSP00000229319.1"/>
    <property type="RefSeq nucleotide sequence ID" value="NM_002300.8"/>
    <property type="RefSeq protein sequence ID" value="NP_002291.1"/>
</dbReference>
<dbReference type="AGR" id="HGNC:6541"/>
<dbReference type="CTD" id="3945"/>
<dbReference type="DisGeNET" id="3945"/>
<dbReference type="GeneCards" id="LDHB"/>
<dbReference type="HGNC" id="HGNC:6541">
    <property type="gene designation" value="LDHB"/>
</dbReference>
<dbReference type="HPA" id="ENSG00000111716">
    <property type="expression patterns" value="Tissue enhanced (heart)"/>
</dbReference>
<dbReference type="MalaCards" id="LDHB"/>
<dbReference type="MIM" id="150100">
    <property type="type" value="gene"/>
</dbReference>
<dbReference type="MIM" id="614128">
    <property type="type" value="phenotype"/>
</dbReference>
<dbReference type="neXtProt" id="NX_P07195"/>
<dbReference type="OpenTargets" id="ENSG00000111716"/>
<dbReference type="Orphanet" id="284435">
    <property type="disease" value="Glycogen storage disease due to lactate dehydrogenase H-subunit deficiency"/>
</dbReference>
<dbReference type="PharmGKB" id="PA30325"/>
<dbReference type="VEuPathDB" id="HostDB:ENSG00000111716"/>
<dbReference type="eggNOG" id="KOG1495">
    <property type="taxonomic scope" value="Eukaryota"/>
</dbReference>
<dbReference type="GeneTree" id="ENSGT00940000153525"/>
<dbReference type="HOGENOM" id="CLU_045401_0_2_1"/>
<dbReference type="InParanoid" id="P07195"/>
<dbReference type="OMA" id="AHVREKG"/>
<dbReference type="OrthoDB" id="9514230at2759"/>
<dbReference type="PAN-GO" id="P07195">
    <property type="GO annotations" value="1 GO annotation based on evolutionary models"/>
</dbReference>
<dbReference type="PhylomeDB" id="P07195"/>
<dbReference type="TreeFam" id="TF314963"/>
<dbReference type="BRENDA" id="1.1.1.27">
    <property type="organism ID" value="2681"/>
</dbReference>
<dbReference type="PathwayCommons" id="P07195"/>
<dbReference type="Reactome" id="R-HSA-70268">
    <property type="pathway name" value="Pyruvate metabolism"/>
</dbReference>
<dbReference type="SABIO-RK" id="P07195"/>
<dbReference type="SignaLink" id="P07195"/>
<dbReference type="SIGNOR" id="P07195"/>
<dbReference type="UniPathway" id="UPA00554">
    <property type="reaction ID" value="UER00611"/>
</dbReference>
<dbReference type="BioGRID-ORCS" id="3945">
    <property type="hits" value="14 hits in 1120 CRISPR screens"/>
</dbReference>
<dbReference type="CD-CODE" id="FB4E32DD">
    <property type="entry name" value="Presynaptic clusters and postsynaptic densities"/>
</dbReference>
<dbReference type="ChiTaRS" id="LDHB">
    <property type="organism name" value="human"/>
</dbReference>
<dbReference type="EvolutionaryTrace" id="P07195"/>
<dbReference type="GenomeRNAi" id="3945"/>
<dbReference type="Pharos" id="P07195">
    <property type="development level" value="Tchem"/>
</dbReference>
<dbReference type="PRO" id="PR:P07195"/>
<dbReference type="Proteomes" id="UP000005640">
    <property type="component" value="Chromosome 12"/>
</dbReference>
<dbReference type="RNAct" id="P07195">
    <property type="molecule type" value="protein"/>
</dbReference>
<dbReference type="Bgee" id="ENSG00000111716">
    <property type="expression patterns" value="Expressed in renal medulla and 210 other cell types or tissues"/>
</dbReference>
<dbReference type="ExpressionAtlas" id="P07195">
    <property type="expression patterns" value="baseline and differential"/>
</dbReference>
<dbReference type="GO" id="GO:0005737">
    <property type="term" value="C:cytoplasm"/>
    <property type="evidence" value="ECO:0000304"/>
    <property type="project" value="UniProtKB"/>
</dbReference>
<dbReference type="GO" id="GO:0005829">
    <property type="term" value="C:cytosol"/>
    <property type="evidence" value="ECO:0000314"/>
    <property type="project" value="HPA"/>
</dbReference>
<dbReference type="GO" id="GO:0070062">
    <property type="term" value="C:extracellular exosome"/>
    <property type="evidence" value="ECO:0007005"/>
    <property type="project" value="UniProtKB"/>
</dbReference>
<dbReference type="GO" id="GO:0016020">
    <property type="term" value="C:membrane"/>
    <property type="evidence" value="ECO:0007005"/>
    <property type="project" value="UniProtKB"/>
</dbReference>
<dbReference type="GO" id="GO:0045121">
    <property type="term" value="C:membrane raft"/>
    <property type="evidence" value="ECO:0000314"/>
    <property type="project" value="UniProtKB"/>
</dbReference>
<dbReference type="GO" id="GO:0005743">
    <property type="term" value="C:mitochondrial inner membrane"/>
    <property type="evidence" value="ECO:0000314"/>
    <property type="project" value="UniProtKB"/>
</dbReference>
<dbReference type="GO" id="GO:0005739">
    <property type="term" value="C:mitochondrion"/>
    <property type="evidence" value="ECO:0000318"/>
    <property type="project" value="GO_Central"/>
</dbReference>
<dbReference type="GO" id="GO:1990204">
    <property type="term" value="C:oxidoreductase complex"/>
    <property type="evidence" value="ECO:0000353"/>
    <property type="project" value="ComplexPortal"/>
</dbReference>
<dbReference type="GO" id="GO:0042802">
    <property type="term" value="F:identical protein binding"/>
    <property type="evidence" value="ECO:0000353"/>
    <property type="project" value="IntAct"/>
</dbReference>
<dbReference type="GO" id="GO:0019900">
    <property type="term" value="F:kinase binding"/>
    <property type="evidence" value="ECO:0007669"/>
    <property type="project" value="Ensembl"/>
</dbReference>
<dbReference type="GO" id="GO:0004459">
    <property type="term" value="F:L-lactate dehydrogenase activity"/>
    <property type="evidence" value="ECO:0000314"/>
    <property type="project" value="UniProtKB"/>
</dbReference>
<dbReference type="GO" id="GO:0051287">
    <property type="term" value="F:NAD binding"/>
    <property type="evidence" value="ECO:0007669"/>
    <property type="project" value="Ensembl"/>
</dbReference>
<dbReference type="GO" id="GO:0006089">
    <property type="term" value="P:lactate metabolic process"/>
    <property type="evidence" value="ECO:0000314"/>
    <property type="project" value="ComplexPortal"/>
</dbReference>
<dbReference type="GO" id="GO:0019674">
    <property type="term" value="P:NAD metabolic process"/>
    <property type="evidence" value="ECO:0007669"/>
    <property type="project" value="Ensembl"/>
</dbReference>
<dbReference type="GO" id="GO:0006090">
    <property type="term" value="P:pyruvate metabolic process"/>
    <property type="evidence" value="ECO:0000314"/>
    <property type="project" value="ComplexPortal"/>
</dbReference>
<dbReference type="CDD" id="cd05293">
    <property type="entry name" value="LDH_1"/>
    <property type="match status" value="1"/>
</dbReference>
<dbReference type="FunFam" id="3.40.50.720:FF:000029">
    <property type="entry name" value="L-lactate dehydrogenase A chain"/>
    <property type="match status" value="1"/>
</dbReference>
<dbReference type="FunFam" id="3.90.110.10:FF:000003">
    <property type="entry name" value="L-lactate dehydrogenase A chain"/>
    <property type="match status" value="1"/>
</dbReference>
<dbReference type="Gene3D" id="3.90.110.10">
    <property type="entry name" value="Lactate dehydrogenase/glycoside hydrolase, family 4, C-terminal"/>
    <property type="match status" value="1"/>
</dbReference>
<dbReference type="Gene3D" id="3.40.50.720">
    <property type="entry name" value="NAD(P)-binding Rossmann-like Domain"/>
    <property type="match status" value="1"/>
</dbReference>
<dbReference type="HAMAP" id="MF_00488">
    <property type="entry name" value="Lactate_dehydrog"/>
    <property type="match status" value="1"/>
</dbReference>
<dbReference type="InterPro" id="IPR001557">
    <property type="entry name" value="L-lactate/malate_DH"/>
</dbReference>
<dbReference type="InterPro" id="IPR011304">
    <property type="entry name" value="L-lactate_DH"/>
</dbReference>
<dbReference type="InterPro" id="IPR018177">
    <property type="entry name" value="L-lactate_DH_AS"/>
</dbReference>
<dbReference type="InterPro" id="IPR022383">
    <property type="entry name" value="Lactate/malate_DH_C"/>
</dbReference>
<dbReference type="InterPro" id="IPR001236">
    <property type="entry name" value="Lactate/malate_DH_N"/>
</dbReference>
<dbReference type="InterPro" id="IPR015955">
    <property type="entry name" value="Lactate_DH/Glyco_Ohase_4_C"/>
</dbReference>
<dbReference type="InterPro" id="IPR036291">
    <property type="entry name" value="NAD(P)-bd_dom_sf"/>
</dbReference>
<dbReference type="NCBIfam" id="TIGR01771">
    <property type="entry name" value="L-LDH-NAD"/>
    <property type="match status" value="1"/>
</dbReference>
<dbReference type="NCBIfam" id="NF000824">
    <property type="entry name" value="PRK00066.1"/>
    <property type="match status" value="1"/>
</dbReference>
<dbReference type="PANTHER" id="PTHR43128">
    <property type="entry name" value="L-2-HYDROXYCARBOXYLATE DEHYDROGENASE (NAD(P)(+))"/>
    <property type="match status" value="1"/>
</dbReference>
<dbReference type="PANTHER" id="PTHR43128:SF2">
    <property type="entry name" value="L-LACTATE DEHYDROGENASE B CHAIN"/>
    <property type="match status" value="1"/>
</dbReference>
<dbReference type="Pfam" id="PF02866">
    <property type="entry name" value="Ldh_1_C"/>
    <property type="match status" value="1"/>
</dbReference>
<dbReference type="Pfam" id="PF00056">
    <property type="entry name" value="Ldh_1_N"/>
    <property type="match status" value="1"/>
</dbReference>
<dbReference type="PIRSF" id="PIRSF000102">
    <property type="entry name" value="Lac_mal_DH"/>
    <property type="match status" value="1"/>
</dbReference>
<dbReference type="PRINTS" id="PR00086">
    <property type="entry name" value="LLDHDRGNASE"/>
</dbReference>
<dbReference type="SUPFAM" id="SSF56327">
    <property type="entry name" value="LDH C-terminal domain-like"/>
    <property type="match status" value="1"/>
</dbReference>
<dbReference type="SUPFAM" id="SSF51735">
    <property type="entry name" value="NAD(P)-binding Rossmann-fold domains"/>
    <property type="match status" value="1"/>
</dbReference>
<dbReference type="PROSITE" id="PS00064">
    <property type="entry name" value="L_LDH"/>
    <property type="match status" value="1"/>
</dbReference>
<proteinExistence type="evidence at protein level"/>